<name>ISPE_TOLAT</name>
<gene>
    <name evidence="1" type="primary">ispE</name>
    <name type="ordered locus">Tola_0819</name>
</gene>
<protein>
    <recommendedName>
        <fullName evidence="1">4-diphosphocytidyl-2-C-methyl-D-erythritol kinase</fullName>
        <shortName evidence="1">CMK</shortName>
        <ecNumber evidence="1">2.7.1.148</ecNumber>
    </recommendedName>
    <alternativeName>
        <fullName evidence="1">4-(cytidine-5'-diphospho)-2-C-methyl-D-erythritol kinase</fullName>
    </alternativeName>
</protein>
<organism>
    <name type="scientific">Tolumonas auensis (strain DSM 9187 / NBRC 110442 / TA 4)</name>
    <dbReference type="NCBI Taxonomy" id="595494"/>
    <lineage>
        <taxon>Bacteria</taxon>
        <taxon>Pseudomonadati</taxon>
        <taxon>Pseudomonadota</taxon>
        <taxon>Gammaproteobacteria</taxon>
        <taxon>Aeromonadales</taxon>
        <taxon>Aeromonadaceae</taxon>
        <taxon>Tolumonas</taxon>
    </lineage>
</organism>
<comment type="function">
    <text evidence="1">Catalyzes the phosphorylation of the position 2 hydroxy group of 4-diphosphocytidyl-2C-methyl-D-erythritol.</text>
</comment>
<comment type="catalytic activity">
    <reaction evidence="1">
        <text>4-CDP-2-C-methyl-D-erythritol + ATP = 4-CDP-2-C-methyl-D-erythritol 2-phosphate + ADP + H(+)</text>
        <dbReference type="Rhea" id="RHEA:18437"/>
        <dbReference type="ChEBI" id="CHEBI:15378"/>
        <dbReference type="ChEBI" id="CHEBI:30616"/>
        <dbReference type="ChEBI" id="CHEBI:57823"/>
        <dbReference type="ChEBI" id="CHEBI:57919"/>
        <dbReference type="ChEBI" id="CHEBI:456216"/>
        <dbReference type="EC" id="2.7.1.148"/>
    </reaction>
</comment>
<comment type="pathway">
    <text evidence="1">Isoprenoid biosynthesis; isopentenyl diphosphate biosynthesis via DXP pathway; isopentenyl diphosphate from 1-deoxy-D-xylulose 5-phosphate: step 3/6.</text>
</comment>
<comment type="similarity">
    <text evidence="1">Belongs to the GHMP kinase family. IspE subfamily.</text>
</comment>
<reference key="1">
    <citation type="submission" date="2009-05" db="EMBL/GenBank/DDBJ databases">
        <title>Complete sequence of Tolumonas auensis DSM 9187.</title>
        <authorList>
            <consortium name="US DOE Joint Genome Institute"/>
            <person name="Lucas S."/>
            <person name="Copeland A."/>
            <person name="Lapidus A."/>
            <person name="Glavina del Rio T."/>
            <person name="Tice H."/>
            <person name="Bruce D."/>
            <person name="Goodwin L."/>
            <person name="Pitluck S."/>
            <person name="Chertkov O."/>
            <person name="Brettin T."/>
            <person name="Detter J.C."/>
            <person name="Han C."/>
            <person name="Larimer F."/>
            <person name="Land M."/>
            <person name="Hauser L."/>
            <person name="Kyrpides N."/>
            <person name="Mikhailova N."/>
            <person name="Spring S."/>
            <person name="Beller H."/>
        </authorList>
    </citation>
    <scope>NUCLEOTIDE SEQUENCE [LARGE SCALE GENOMIC DNA]</scope>
    <source>
        <strain>DSM 9187 / NBRC 110442 / TA 4</strain>
    </source>
</reference>
<keyword id="KW-0067">ATP-binding</keyword>
<keyword id="KW-0414">Isoprene biosynthesis</keyword>
<keyword id="KW-0418">Kinase</keyword>
<keyword id="KW-0547">Nucleotide-binding</keyword>
<keyword id="KW-1185">Reference proteome</keyword>
<keyword id="KW-0808">Transferase</keyword>
<proteinExistence type="inferred from homology"/>
<dbReference type="EC" id="2.7.1.148" evidence="1"/>
<dbReference type="EMBL" id="CP001616">
    <property type="protein sequence ID" value="ACQ92447.1"/>
    <property type="molecule type" value="Genomic_DNA"/>
</dbReference>
<dbReference type="RefSeq" id="WP_012729046.1">
    <property type="nucleotide sequence ID" value="NC_012691.1"/>
</dbReference>
<dbReference type="SMR" id="C4LBL2"/>
<dbReference type="STRING" id="595494.Tola_0819"/>
<dbReference type="KEGG" id="tau:Tola_0819"/>
<dbReference type="eggNOG" id="COG1947">
    <property type="taxonomic scope" value="Bacteria"/>
</dbReference>
<dbReference type="HOGENOM" id="CLU_053057_3_0_6"/>
<dbReference type="OrthoDB" id="9809438at2"/>
<dbReference type="UniPathway" id="UPA00056">
    <property type="reaction ID" value="UER00094"/>
</dbReference>
<dbReference type="Proteomes" id="UP000009073">
    <property type="component" value="Chromosome"/>
</dbReference>
<dbReference type="GO" id="GO:0050515">
    <property type="term" value="F:4-(cytidine 5'-diphospho)-2-C-methyl-D-erythritol kinase activity"/>
    <property type="evidence" value="ECO:0007669"/>
    <property type="project" value="UniProtKB-UniRule"/>
</dbReference>
<dbReference type="GO" id="GO:0005524">
    <property type="term" value="F:ATP binding"/>
    <property type="evidence" value="ECO:0007669"/>
    <property type="project" value="UniProtKB-UniRule"/>
</dbReference>
<dbReference type="GO" id="GO:0019288">
    <property type="term" value="P:isopentenyl diphosphate biosynthetic process, methylerythritol 4-phosphate pathway"/>
    <property type="evidence" value="ECO:0007669"/>
    <property type="project" value="UniProtKB-UniRule"/>
</dbReference>
<dbReference type="GO" id="GO:0016114">
    <property type="term" value="P:terpenoid biosynthetic process"/>
    <property type="evidence" value="ECO:0007669"/>
    <property type="project" value="InterPro"/>
</dbReference>
<dbReference type="Gene3D" id="3.30.230.10">
    <property type="match status" value="1"/>
</dbReference>
<dbReference type="Gene3D" id="3.30.70.890">
    <property type="entry name" value="GHMP kinase, C-terminal domain"/>
    <property type="match status" value="1"/>
</dbReference>
<dbReference type="HAMAP" id="MF_00061">
    <property type="entry name" value="IspE"/>
    <property type="match status" value="1"/>
</dbReference>
<dbReference type="InterPro" id="IPR013750">
    <property type="entry name" value="GHMP_kinase_C_dom"/>
</dbReference>
<dbReference type="InterPro" id="IPR036554">
    <property type="entry name" value="GHMP_kinase_C_sf"/>
</dbReference>
<dbReference type="InterPro" id="IPR006204">
    <property type="entry name" value="GHMP_kinase_N_dom"/>
</dbReference>
<dbReference type="InterPro" id="IPR004424">
    <property type="entry name" value="IspE"/>
</dbReference>
<dbReference type="InterPro" id="IPR020568">
    <property type="entry name" value="Ribosomal_Su5_D2-typ_SF"/>
</dbReference>
<dbReference type="InterPro" id="IPR014721">
    <property type="entry name" value="Ribsml_uS5_D2-typ_fold_subgr"/>
</dbReference>
<dbReference type="NCBIfam" id="TIGR00154">
    <property type="entry name" value="ispE"/>
    <property type="match status" value="1"/>
</dbReference>
<dbReference type="PANTHER" id="PTHR43527">
    <property type="entry name" value="4-DIPHOSPHOCYTIDYL-2-C-METHYL-D-ERYTHRITOL KINASE, CHLOROPLASTIC"/>
    <property type="match status" value="1"/>
</dbReference>
<dbReference type="PANTHER" id="PTHR43527:SF2">
    <property type="entry name" value="4-DIPHOSPHOCYTIDYL-2-C-METHYL-D-ERYTHRITOL KINASE, CHLOROPLASTIC"/>
    <property type="match status" value="1"/>
</dbReference>
<dbReference type="Pfam" id="PF08544">
    <property type="entry name" value="GHMP_kinases_C"/>
    <property type="match status" value="1"/>
</dbReference>
<dbReference type="Pfam" id="PF00288">
    <property type="entry name" value="GHMP_kinases_N"/>
    <property type="match status" value="1"/>
</dbReference>
<dbReference type="PIRSF" id="PIRSF010376">
    <property type="entry name" value="IspE"/>
    <property type="match status" value="1"/>
</dbReference>
<dbReference type="SUPFAM" id="SSF55060">
    <property type="entry name" value="GHMP Kinase, C-terminal domain"/>
    <property type="match status" value="1"/>
</dbReference>
<dbReference type="SUPFAM" id="SSF54211">
    <property type="entry name" value="Ribosomal protein S5 domain 2-like"/>
    <property type="match status" value="1"/>
</dbReference>
<accession>C4LBL2</accession>
<evidence type="ECO:0000255" key="1">
    <source>
        <dbReference type="HAMAP-Rule" id="MF_00061"/>
    </source>
</evidence>
<sequence>MSTPENMAWPAPAKLNLFLHVNGRRSDGYHELQTLFIFLDHCDWLRFHINNSDLVDIKPALADVPPEQNLIYRAAMLLKQYSTQPLGVMVELDKRLPMGGGIGGGSSDAATTLVALNYLWKINLPVDELAELGRQLGADVPVFVRGHAAFAEGVGEKLLPVEVTQKWYLVLVPECHVSTAEIFRHKDLKRDTPKQNWRELQQGNWHNDCEPLVKKNYPEVEKALRWLIEYAPSRMTGTGACVFAEFKHEHEAREVLALIPTWLRGFVARGENLSPLHVVLQQVYA</sequence>
<feature type="chain" id="PRO_1000202389" description="4-diphosphocytidyl-2-C-methyl-D-erythritol kinase">
    <location>
        <begin position="1"/>
        <end position="285"/>
    </location>
</feature>
<feature type="active site" evidence="1">
    <location>
        <position position="14"/>
    </location>
</feature>
<feature type="active site" evidence="1">
    <location>
        <position position="139"/>
    </location>
</feature>
<feature type="binding site" evidence="1">
    <location>
        <begin position="97"/>
        <end position="107"/>
    </location>
    <ligand>
        <name>ATP</name>
        <dbReference type="ChEBI" id="CHEBI:30616"/>
    </ligand>
</feature>